<feature type="chain" id="PRO_0000133426" description="Protein E7">
    <location>
        <begin position="1"/>
        <end position="87"/>
    </location>
</feature>
<feature type="zinc finger region" evidence="1">
    <location>
        <begin position="50"/>
        <end position="86"/>
    </location>
</feature>
<feature type="region of interest" description="E7 terminal domain" evidence="1">
    <location>
        <begin position="1"/>
        <end position="38"/>
    </location>
</feature>
<feature type="short sequence motif" description="Nuclear export signal" evidence="1">
    <location>
        <begin position="68"/>
        <end position="76"/>
    </location>
</feature>
<dbReference type="EMBL" id="U31783">
    <property type="protein sequence ID" value="AAA79423.1"/>
    <property type="molecule type" value="Genomic_DNA"/>
</dbReference>
<dbReference type="SMR" id="P50783"/>
<dbReference type="Proteomes" id="UP000009158">
    <property type="component" value="Genome"/>
</dbReference>
<dbReference type="GO" id="GO:0030430">
    <property type="term" value="C:host cell cytoplasm"/>
    <property type="evidence" value="ECO:0007669"/>
    <property type="project" value="UniProtKB-SubCell"/>
</dbReference>
<dbReference type="GO" id="GO:0042025">
    <property type="term" value="C:host cell nucleus"/>
    <property type="evidence" value="ECO:0007669"/>
    <property type="project" value="UniProtKB-SubCell"/>
</dbReference>
<dbReference type="GO" id="GO:0003677">
    <property type="term" value="F:DNA binding"/>
    <property type="evidence" value="ECO:0007669"/>
    <property type="project" value="UniProtKB-UniRule"/>
</dbReference>
<dbReference type="GO" id="GO:0003700">
    <property type="term" value="F:DNA-binding transcription factor activity"/>
    <property type="evidence" value="ECO:0007669"/>
    <property type="project" value="UniProtKB-UniRule"/>
</dbReference>
<dbReference type="GO" id="GO:0019904">
    <property type="term" value="F:protein domain specific binding"/>
    <property type="evidence" value="ECO:0007669"/>
    <property type="project" value="UniProtKB-UniRule"/>
</dbReference>
<dbReference type="GO" id="GO:0008270">
    <property type="term" value="F:zinc ion binding"/>
    <property type="evidence" value="ECO:0007669"/>
    <property type="project" value="UniProtKB-KW"/>
</dbReference>
<dbReference type="GO" id="GO:0006351">
    <property type="term" value="P:DNA-templated transcription"/>
    <property type="evidence" value="ECO:0007669"/>
    <property type="project" value="UniProtKB-UniRule"/>
</dbReference>
<dbReference type="GO" id="GO:0039645">
    <property type="term" value="P:symbiont-mediated perturbation of host cell cycle G1/S transition checkpoint"/>
    <property type="evidence" value="ECO:0007669"/>
    <property type="project" value="UniProtKB-UniRule"/>
</dbReference>
<dbReference type="GO" id="GO:0052170">
    <property type="term" value="P:symbiont-mediated suppression of host innate immune response"/>
    <property type="evidence" value="ECO:0007669"/>
    <property type="project" value="UniProtKB-KW"/>
</dbReference>
<dbReference type="GO" id="GO:0039502">
    <property type="term" value="P:symbiont-mediated suppression of host type I interferon-mediated signaling pathway"/>
    <property type="evidence" value="ECO:0007669"/>
    <property type="project" value="UniProtKB-UniRule"/>
</dbReference>
<dbReference type="Gene3D" id="3.30.160.330">
    <property type="match status" value="1"/>
</dbReference>
<dbReference type="HAMAP" id="MF_04004">
    <property type="entry name" value="PPV_E7"/>
    <property type="match status" value="1"/>
</dbReference>
<dbReference type="InterPro" id="IPR000148">
    <property type="entry name" value="Papilloma_E7"/>
</dbReference>
<dbReference type="Pfam" id="PF00527">
    <property type="entry name" value="E7"/>
    <property type="match status" value="1"/>
</dbReference>
<dbReference type="PIRSF" id="PIRSF003407">
    <property type="entry name" value="Papvi_E7"/>
    <property type="match status" value="1"/>
</dbReference>
<dbReference type="SUPFAM" id="SSF161234">
    <property type="entry name" value="E7 C-terminal domain-like"/>
    <property type="match status" value="1"/>
</dbReference>
<sequence length="87" mass="9625">MHGPHPTVKDIELSLAPEDVPVQCNVQLDEEDYTNVEEPAQQAYRVVTLCPKCSSPLRLVVECSHADIRALEQLLLGTLTVVCPRCV</sequence>
<proteinExistence type="inferred from homology"/>
<reference key="1">
    <citation type="submission" date="1995-10" db="EMBL/GenBank/DDBJ databases">
        <authorList>
            <person name="Delius H."/>
        </authorList>
    </citation>
    <scope>NUCLEOTIDE SEQUENCE [GENOMIC DNA]</scope>
</reference>
<reference key="2">
    <citation type="journal article" date="2002" name="Rev. Med. Virol.">
        <title>Interactions of SV40 large T antigen and other viral proteins with retinoblastoma tumour suppressor.</title>
        <authorList>
            <person name="Lee C."/>
            <person name="Cho Y."/>
        </authorList>
    </citation>
    <scope>REVIEW</scope>
</reference>
<gene>
    <name evidence="1" type="primary">E7</name>
</gene>
<accession>P50783</accession>
<comment type="function">
    <text evidence="1">Plays a role in viral genome replication by driving entry of quiescent cells into the cell cycle. Stimulation of progression from G1 to S phase allows the virus to efficiently use the cellular DNA replicating machinery to achieve viral genome replication. E7 protein has both transforming and trans-activating activities. Induces the disassembly of the E2F1 transcription factor from RB1, with subsequent transcriptional activation of E2F1-regulated S-phase genes. Interferes with host histone deacetylation mediated by HDAC1 and HDAC2, leading to transcription activation. Also plays a role in the inhibition of both antiviral and antiproliferative functions of host interferon alpha. Interaction with host TMEM173/STING impairs the ability of TMEM173/STING to sense cytosolic DNA and promote the production of type I interferon (IFN-alpha and IFN-beta).</text>
</comment>
<comment type="subunit">
    <text evidence="1">Homodimer. Homooligomer. Interacts with host RB1; this interaction induces dissociation of RB1-E2F1 complex thereby disrupting RB1 activity. Interacts with host EP300; this interaction represses EP300 transcriptional activity. Interacts with protein E2; this interaction inhibits E7 oncogenic activity. Interacts with host TMEM173/STING; this interaction impairs the ability of TMEM173/STING to sense cytosolic DNA and promote the production of type I interferon (IFN-alpha and IFN-beta).</text>
</comment>
<comment type="subcellular location">
    <subcellularLocation>
        <location evidence="1">Host cytoplasm</location>
    </subcellularLocation>
    <subcellularLocation>
        <location evidence="1">Host nucleus</location>
    </subcellularLocation>
    <text evidence="1">Predominantly found in the host nucleus.</text>
</comment>
<comment type="domain">
    <text evidence="1">The E7 terminal domain is an intrinsically disordered domain, whose flexibility and conformational transitions confer target adaptability to the oncoprotein. It allows adaptation to a variety of protein targets and exposes the PEST degradation sequence that regulates its turnover in the cell.</text>
</comment>
<comment type="PTM">
    <text evidence="1">Highly phosphorylated.</text>
</comment>
<comment type="similarity">
    <text evidence="1">Belongs to the papillomaviridae E7 protein family.</text>
</comment>
<evidence type="ECO:0000255" key="1">
    <source>
        <dbReference type="HAMAP-Rule" id="MF_04004"/>
    </source>
</evidence>
<name>VE7_HPV28</name>
<organism>
    <name type="scientific">Human papillomavirus 28</name>
    <dbReference type="NCBI Taxonomy" id="37111"/>
    <lineage>
        <taxon>Viruses</taxon>
        <taxon>Monodnaviria</taxon>
        <taxon>Shotokuvirae</taxon>
        <taxon>Cossaviricota</taxon>
        <taxon>Papovaviricetes</taxon>
        <taxon>Zurhausenvirales</taxon>
        <taxon>Papillomaviridae</taxon>
        <taxon>Firstpapillomavirinae</taxon>
        <taxon>Alphapapillomavirus</taxon>
        <taxon>Alphapapillomavirus 2</taxon>
    </lineage>
</organism>
<organismHost>
    <name type="scientific">Homo sapiens</name>
    <name type="common">Human</name>
    <dbReference type="NCBI Taxonomy" id="9606"/>
</organismHost>
<keyword id="KW-0010">Activator</keyword>
<keyword id="KW-0238">DNA-binding</keyword>
<keyword id="KW-0244">Early protein</keyword>
<keyword id="KW-1078">G1/S host cell cycle checkpoint dysregulation by virus</keyword>
<keyword id="KW-1035">Host cytoplasm</keyword>
<keyword id="KW-1048">Host nucleus</keyword>
<keyword id="KW-0945">Host-virus interaction</keyword>
<keyword id="KW-1090">Inhibition of host innate immune response by virus</keyword>
<keyword id="KW-1114">Inhibition of host interferon signaling pathway by virus</keyword>
<keyword id="KW-0922">Interferon antiviral system evasion</keyword>
<keyword id="KW-0479">Metal-binding</keyword>
<keyword id="KW-1121">Modulation of host cell cycle by virus</keyword>
<keyword id="KW-0553">Oncogene</keyword>
<keyword id="KW-0804">Transcription</keyword>
<keyword id="KW-0805">Transcription regulation</keyword>
<keyword id="KW-0899">Viral immunoevasion</keyword>
<keyword id="KW-0862">Zinc</keyword>
<keyword id="KW-0863">Zinc-finger</keyword>
<protein>
    <recommendedName>
        <fullName evidence="1">Protein E7</fullName>
    </recommendedName>
</protein>